<name>KTHY_METFK</name>
<organism>
    <name type="scientific">Methylobacillus flagellatus (strain ATCC 51484 / DSM 6875 / VKM B-1610 / KT)</name>
    <dbReference type="NCBI Taxonomy" id="265072"/>
    <lineage>
        <taxon>Bacteria</taxon>
        <taxon>Pseudomonadati</taxon>
        <taxon>Pseudomonadota</taxon>
        <taxon>Betaproteobacteria</taxon>
        <taxon>Nitrosomonadales</taxon>
        <taxon>Methylophilaceae</taxon>
        <taxon>Methylobacillus</taxon>
    </lineage>
</organism>
<keyword id="KW-0067">ATP-binding</keyword>
<keyword id="KW-0418">Kinase</keyword>
<keyword id="KW-0545">Nucleotide biosynthesis</keyword>
<keyword id="KW-0547">Nucleotide-binding</keyword>
<keyword id="KW-1185">Reference proteome</keyword>
<keyword id="KW-0808">Transferase</keyword>
<reference key="1">
    <citation type="submission" date="2006-03" db="EMBL/GenBank/DDBJ databases">
        <title>Complete sequence of Methylobacillus flagellatus KT.</title>
        <authorList>
            <consortium name="US DOE Joint Genome Institute"/>
            <person name="Copeland A."/>
            <person name="Lucas S."/>
            <person name="Lapidus A."/>
            <person name="Barry K."/>
            <person name="Detter J.C."/>
            <person name="Glavina del Rio T."/>
            <person name="Hammon N."/>
            <person name="Israni S."/>
            <person name="Dalin E."/>
            <person name="Tice H."/>
            <person name="Pitluck S."/>
            <person name="Brettin T."/>
            <person name="Bruce D."/>
            <person name="Han C."/>
            <person name="Tapia R."/>
            <person name="Saunders E."/>
            <person name="Gilna P."/>
            <person name="Schmutz J."/>
            <person name="Larimer F."/>
            <person name="Land M."/>
            <person name="Kyrpides N."/>
            <person name="Anderson I."/>
            <person name="Richardson P."/>
        </authorList>
    </citation>
    <scope>NUCLEOTIDE SEQUENCE [LARGE SCALE GENOMIC DNA]</scope>
    <source>
        <strain>ATCC 51484 / DSM 6875 / VKM B-1610 / KT</strain>
    </source>
</reference>
<evidence type="ECO:0000255" key="1">
    <source>
        <dbReference type="HAMAP-Rule" id="MF_00165"/>
    </source>
</evidence>
<protein>
    <recommendedName>
        <fullName evidence="1">Thymidylate kinase</fullName>
        <ecNumber evidence="1">2.7.4.9</ecNumber>
    </recommendedName>
    <alternativeName>
        <fullName evidence="1">dTMP kinase</fullName>
    </alternativeName>
</protein>
<feature type="chain" id="PRO_1000097410" description="Thymidylate kinase">
    <location>
        <begin position="1"/>
        <end position="203"/>
    </location>
</feature>
<feature type="binding site" evidence="1">
    <location>
        <begin position="10"/>
        <end position="17"/>
    </location>
    <ligand>
        <name>ATP</name>
        <dbReference type="ChEBI" id="CHEBI:30616"/>
    </ligand>
</feature>
<accession>Q1H169</accession>
<proteinExistence type="inferred from homology"/>
<dbReference type="EC" id="2.7.4.9" evidence="1"/>
<dbReference type="EMBL" id="CP000284">
    <property type="protein sequence ID" value="ABE49768.1"/>
    <property type="molecule type" value="Genomic_DNA"/>
</dbReference>
<dbReference type="RefSeq" id="WP_011479722.1">
    <property type="nucleotide sequence ID" value="NC_007947.1"/>
</dbReference>
<dbReference type="SMR" id="Q1H169"/>
<dbReference type="STRING" id="265072.Mfla_1500"/>
<dbReference type="KEGG" id="mfa:Mfla_1500"/>
<dbReference type="eggNOG" id="COG0125">
    <property type="taxonomic scope" value="Bacteria"/>
</dbReference>
<dbReference type="HOGENOM" id="CLU_049131_0_2_4"/>
<dbReference type="OrthoDB" id="9774907at2"/>
<dbReference type="Proteomes" id="UP000002440">
    <property type="component" value="Chromosome"/>
</dbReference>
<dbReference type="GO" id="GO:0005829">
    <property type="term" value="C:cytosol"/>
    <property type="evidence" value="ECO:0007669"/>
    <property type="project" value="TreeGrafter"/>
</dbReference>
<dbReference type="GO" id="GO:0005524">
    <property type="term" value="F:ATP binding"/>
    <property type="evidence" value="ECO:0007669"/>
    <property type="project" value="UniProtKB-UniRule"/>
</dbReference>
<dbReference type="GO" id="GO:0004798">
    <property type="term" value="F:dTMP kinase activity"/>
    <property type="evidence" value="ECO:0007669"/>
    <property type="project" value="UniProtKB-UniRule"/>
</dbReference>
<dbReference type="GO" id="GO:0006233">
    <property type="term" value="P:dTDP biosynthetic process"/>
    <property type="evidence" value="ECO:0007669"/>
    <property type="project" value="InterPro"/>
</dbReference>
<dbReference type="GO" id="GO:0006235">
    <property type="term" value="P:dTTP biosynthetic process"/>
    <property type="evidence" value="ECO:0007669"/>
    <property type="project" value="UniProtKB-UniRule"/>
</dbReference>
<dbReference type="GO" id="GO:0006227">
    <property type="term" value="P:dUDP biosynthetic process"/>
    <property type="evidence" value="ECO:0007669"/>
    <property type="project" value="TreeGrafter"/>
</dbReference>
<dbReference type="CDD" id="cd01672">
    <property type="entry name" value="TMPK"/>
    <property type="match status" value="1"/>
</dbReference>
<dbReference type="FunFam" id="3.40.50.300:FF:000225">
    <property type="entry name" value="Thymidylate kinase"/>
    <property type="match status" value="1"/>
</dbReference>
<dbReference type="Gene3D" id="3.40.50.300">
    <property type="entry name" value="P-loop containing nucleotide triphosphate hydrolases"/>
    <property type="match status" value="1"/>
</dbReference>
<dbReference type="HAMAP" id="MF_00165">
    <property type="entry name" value="Thymidylate_kinase"/>
    <property type="match status" value="1"/>
</dbReference>
<dbReference type="InterPro" id="IPR027417">
    <property type="entry name" value="P-loop_NTPase"/>
</dbReference>
<dbReference type="InterPro" id="IPR039430">
    <property type="entry name" value="Thymidylate_kin-like_dom"/>
</dbReference>
<dbReference type="InterPro" id="IPR018094">
    <property type="entry name" value="Thymidylate_kinase"/>
</dbReference>
<dbReference type="NCBIfam" id="TIGR00041">
    <property type="entry name" value="DTMP_kinase"/>
    <property type="match status" value="1"/>
</dbReference>
<dbReference type="PANTHER" id="PTHR10344">
    <property type="entry name" value="THYMIDYLATE KINASE"/>
    <property type="match status" value="1"/>
</dbReference>
<dbReference type="PANTHER" id="PTHR10344:SF4">
    <property type="entry name" value="UMP-CMP KINASE 2, MITOCHONDRIAL"/>
    <property type="match status" value="1"/>
</dbReference>
<dbReference type="Pfam" id="PF02223">
    <property type="entry name" value="Thymidylate_kin"/>
    <property type="match status" value="1"/>
</dbReference>
<dbReference type="SUPFAM" id="SSF52540">
    <property type="entry name" value="P-loop containing nucleoside triphosphate hydrolases"/>
    <property type="match status" value="1"/>
</dbReference>
<sequence>MRGRFITLEGMDGAGKSSHIESIVSVLEGRGLEVVSTREPGGTPLGEKLRELLLHERMHVETETLLMFAARREHIAEVIEPALARGAWVVSDRFTDASFAYQCGGRGVPCEKVEALEAWVHPDLQPDLTLLFDVPVEISVARLAAARTPDKFERESAEFFRRIRNGYLARAEAQPQRFRLIDGNRPMDTVRKEVLDIMREFKA</sequence>
<comment type="function">
    <text evidence="1">Phosphorylation of dTMP to form dTDP in both de novo and salvage pathways of dTTP synthesis.</text>
</comment>
<comment type="catalytic activity">
    <reaction evidence="1">
        <text>dTMP + ATP = dTDP + ADP</text>
        <dbReference type="Rhea" id="RHEA:13517"/>
        <dbReference type="ChEBI" id="CHEBI:30616"/>
        <dbReference type="ChEBI" id="CHEBI:58369"/>
        <dbReference type="ChEBI" id="CHEBI:63528"/>
        <dbReference type="ChEBI" id="CHEBI:456216"/>
        <dbReference type="EC" id="2.7.4.9"/>
    </reaction>
</comment>
<comment type="similarity">
    <text evidence="1">Belongs to the thymidylate kinase family.</text>
</comment>
<gene>
    <name evidence="1" type="primary">tmk</name>
    <name type="ordered locus">Mfla_1500</name>
</gene>